<organism>
    <name type="scientific">Aspergillus fumigatus (strain ATCC MYA-4609 / CBS 101355 / FGSC A1100 / Af293)</name>
    <name type="common">Neosartorya fumigata</name>
    <dbReference type="NCBI Taxonomy" id="330879"/>
    <lineage>
        <taxon>Eukaryota</taxon>
        <taxon>Fungi</taxon>
        <taxon>Dikarya</taxon>
        <taxon>Ascomycota</taxon>
        <taxon>Pezizomycotina</taxon>
        <taxon>Eurotiomycetes</taxon>
        <taxon>Eurotiomycetidae</taxon>
        <taxon>Eurotiales</taxon>
        <taxon>Aspergillaceae</taxon>
        <taxon>Aspergillus</taxon>
        <taxon>Aspergillus subgen. Fumigati</taxon>
    </lineage>
</organism>
<keyword id="KW-0256">Endoplasmic reticulum</keyword>
<keyword id="KW-0325">Glycoprotein</keyword>
<keyword id="KW-0413">Isomerase</keyword>
<keyword id="KW-0444">Lipid biosynthesis</keyword>
<keyword id="KW-0443">Lipid metabolism</keyword>
<keyword id="KW-0472">Membrane</keyword>
<keyword id="KW-1185">Reference proteome</keyword>
<keyword id="KW-0752">Steroid biosynthesis</keyword>
<keyword id="KW-0753">Steroid metabolism</keyword>
<keyword id="KW-0756">Sterol biosynthesis</keyword>
<keyword id="KW-1207">Sterol metabolism</keyword>
<keyword id="KW-0812">Transmembrane</keyword>
<keyword id="KW-1133">Transmembrane helix</keyword>
<feature type="chain" id="PRO_0000454129" description="C-8 sterol isomerase erg2">
    <location>
        <begin position="1"/>
        <end position="239"/>
    </location>
</feature>
<feature type="transmembrane region" description="Helical" evidence="2">
    <location>
        <begin position="27"/>
        <end position="47"/>
    </location>
</feature>
<feature type="glycosylation site" description="N-linked (GlcNAc...) asparagine" evidence="3">
    <location>
        <position position="11"/>
    </location>
</feature>
<feature type="glycosylation site" description="N-linked (GlcNAc...) asparagine" evidence="3">
    <location>
        <position position="73"/>
    </location>
</feature>
<sequence length="239" mass="27032">MPSKSSSPQSNSTRKNSCGCCCFSVRKFGFLAVFVAIFAALYSYLDARLEQFYIFNPEHLHDLSQRAIQAHGNDTRAMVDFIVAELDQKIPGNHLNKNEEWIFNNAGGAMGAMYIIHASITEYLIIFGTAIGTEGHTGRHTADDYFNILQGTQVAFVPGTFEPEVYPPGTVHHLRRGEVKQYKMEQSCFALEYARGWIPPMLFFGYADTFTSTLDFPTLWATTRVTGREMITNLLRRKF</sequence>
<name>ERG2_ASPFU</name>
<accession>Q4WJU9</accession>
<comment type="function">
    <text evidence="1 6 7">C-8 sterol isomerase; part of the third module of ergosterol biosynthesis pathway that includes the late steps of the pathway (Probable) (PubMed:16110826). Erg2 catalyzes the reaction which results in unsaturation at C-7 in the B ring of sterols and thus converts fecosterol to episterol (By similarity). The third module or late pathway involves the ergosterol synthesis itself through consecutive reactions that mainly occur in the endoplasmic reticulum (ER) membrane. Firstly, the squalene synthase erg9 catalyzes the condensation of 2 farnesyl pyrophosphate moieties to form squalene, which is the precursor of all steroids. Squalene synthase is crucial for balancing the incorporation of farnesyl diphosphate (FPP) into sterol and nonsterol isoprene synthesis. Secondly, squalene is converted into lanosterol by the consecutive action of the squalene epoxidase erg1 and the lanosterol synthase erg7. Then, the delta(24)-sterol C-methyltransferase erg6 methylates lanosterol at C-24 to produce eburicol. Eburicol is the substrate of the sterol 14-alpha demethylase encoded by cyp51A and cyp51B, to yield 4,4,24-trimethyl ergosta-8,14,24(28)-trienol. The C-14 reductase erg24 then reduces the C14=C15 double bond which leads to 4,4-dimethylfecosterol. A sequence of further demethylations at C-4, involving the C-4 demethylation complex containing the C-4 methylsterol oxidases erg25A or erg25B, the sterol-4-alpha-carboxylate 3-dehydrogenase erg26 and the 3-keto-steroid reductase erg27, leads to the production of fecosterol via 4-methylfecosterol. The C-8 sterol isomerase erg2 then catalyzes the reaction which results in unsaturation at C-7 in the B ring of sterols and thus converts fecosterol to episterol. The sterol-C5-desaturase erg3B then catalyzes the introduction of a C-5 double bond in the B ring to produce 5-dehydroepisterol. The 2 other sterol-C5-desaturases, erg3A and erg3C, seem to be less important in ergosterol biosynthesis. The C-22 sterol desaturase erg5 further converts 5-dehydroepisterol into ergosta-5,7,22,24(28)-tetraen-3beta-ol by forming the C-22(23) double bond in the sterol side chain. Finally, ergosta-5,7,22,24(28)-tetraen-3beta-ol is substrate of the C-24(28) sterol reductases erg4A and erg4B to produce ergosterol. Possible alternative sterol biosynthetic pathways might exist from fecosterol to ergosterol, depending on the activities of the erg3 isoforms (Probable) (PubMed:16110826, PubMed:18191972).</text>
</comment>
<comment type="catalytic activity">
    <reaction evidence="1">
        <text>fecosterol = episterol</text>
        <dbReference type="Rhea" id="RHEA:33435"/>
        <dbReference type="ChEBI" id="CHEBI:17038"/>
        <dbReference type="ChEBI" id="CHEBI:23929"/>
    </reaction>
    <physiologicalReaction direction="left-to-right" evidence="1">
        <dbReference type="Rhea" id="RHEA:33436"/>
    </physiologicalReaction>
</comment>
<comment type="pathway">
    <text evidence="6">Steroid metabolism; ergosterol biosynthesis.</text>
</comment>
<comment type="subcellular location">
    <subcellularLocation>
        <location evidence="5">Endoplasmic reticulum membrane</location>
        <topology evidence="2">Single-pass membrane protein</topology>
    </subcellularLocation>
</comment>
<comment type="miscellaneous">
    <text evidence="7">In Aspergillus, the biosynthesis pathway of the sterol precursors leading to the prevalent sterol ergosterol differs from yeast. The ring system of lanosterol in S.cerevisiae is firstly demethylised in three enzymatic steps leading to the intermediate zymosterol and secondly a methyl group is added to zymosterol by the sterol 24-C-methyltransferase to form fecosterol. In Aspergillus, lanosterol is firstly transmethylated by the sterol 24-C-methyltransferase leading to the intermediate eburicol and secondly demethylated in three steps to form fecosterol.</text>
</comment>
<comment type="similarity">
    <text evidence="5">Belongs to the ERG2 family.</text>
</comment>
<dbReference type="EC" id="5.-.-.-" evidence="1"/>
<dbReference type="EMBL" id="AAHF01000007">
    <property type="protein sequence ID" value="EAL88183.1"/>
    <property type="molecule type" value="Genomic_DNA"/>
</dbReference>
<dbReference type="RefSeq" id="XP_750221.1">
    <property type="nucleotide sequence ID" value="XM_745128.1"/>
</dbReference>
<dbReference type="SMR" id="Q4WJU9"/>
<dbReference type="FunCoup" id="Q4WJU9">
    <property type="interactions" value="150"/>
</dbReference>
<dbReference type="STRING" id="330879.Q4WJU9"/>
<dbReference type="GlyCosmos" id="Q4WJU9">
    <property type="glycosylation" value="2 sites, No reported glycans"/>
</dbReference>
<dbReference type="EnsemblFungi" id="EAL88183">
    <property type="protein sequence ID" value="EAL88183"/>
    <property type="gene ID" value="AFUA_1G04720"/>
</dbReference>
<dbReference type="GeneID" id="3508000"/>
<dbReference type="KEGG" id="afm:AFUA_1G04720"/>
<dbReference type="VEuPathDB" id="FungiDB:Afu1g04720"/>
<dbReference type="eggNOG" id="KOG4143">
    <property type="taxonomic scope" value="Eukaryota"/>
</dbReference>
<dbReference type="HOGENOM" id="CLU_085469_0_0_1"/>
<dbReference type="InParanoid" id="Q4WJU9"/>
<dbReference type="OMA" id="AMYVIHA"/>
<dbReference type="OrthoDB" id="347124at2759"/>
<dbReference type="UniPathway" id="UPA00768"/>
<dbReference type="Proteomes" id="UP000002530">
    <property type="component" value="Chromosome 1"/>
</dbReference>
<dbReference type="GO" id="GO:0005783">
    <property type="term" value="C:endoplasmic reticulum"/>
    <property type="evidence" value="ECO:0000318"/>
    <property type="project" value="GO_Central"/>
</dbReference>
<dbReference type="GO" id="GO:0005789">
    <property type="term" value="C:endoplasmic reticulum membrane"/>
    <property type="evidence" value="ECO:0007669"/>
    <property type="project" value="UniProtKB-SubCell"/>
</dbReference>
<dbReference type="GO" id="GO:0016853">
    <property type="term" value="F:isomerase activity"/>
    <property type="evidence" value="ECO:0007669"/>
    <property type="project" value="UniProtKB-KW"/>
</dbReference>
<dbReference type="GO" id="GO:0006696">
    <property type="term" value="P:ergosterol biosynthetic process"/>
    <property type="evidence" value="ECO:0000318"/>
    <property type="project" value="GO_Central"/>
</dbReference>
<dbReference type="InterPro" id="IPR006716">
    <property type="entry name" value="ERG2_sigma1_rcpt-like"/>
</dbReference>
<dbReference type="PANTHER" id="PTHR10868">
    <property type="entry name" value="SIGMA 1-TYPE OPIOID RECEPTOR-RELATED"/>
    <property type="match status" value="1"/>
</dbReference>
<dbReference type="PANTHER" id="PTHR10868:SF1">
    <property type="entry name" value="SIGMA NON-OPIOID INTRACELLULAR RECEPTOR 1"/>
    <property type="match status" value="1"/>
</dbReference>
<dbReference type="Pfam" id="PF04622">
    <property type="entry name" value="ERG2_Sigma1R"/>
    <property type="match status" value="1"/>
</dbReference>
<evidence type="ECO:0000250" key="1">
    <source>
        <dbReference type="UniProtKB" id="P32352"/>
    </source>
</evidence>
<evidence type="ECO:0000255" key="2"/>
<evidence type="ECO:0000255" key="3">
    <source>
        <dbReference type="PROSITE-ProRule" id="PRU00498"/>
    </source>
</evidence>
<evidence type="ECO:0000303" key="4">
    <source>
    </source>
</evidence>
<evidence type="ECO:0000305" key="5"/>
<evidence type="ECO:0000305" key="6">
    <source>
    </source>
</evidence>
<evidence type="ECO:0000305" key="7">
    <source>
    </source>
</evidence>
<reference key="1">
    <citation type="journal article" date="2005" name="Nature">
        <title>Genomic sequence of the pathogenic and allergenic filamentous fungus Aspergillus fumigatus.</title>
        <authorList>
            <person name="Nierman W.C."/>
            <person name="Pain A."/>
            <person name="Anderson M.J."/>
            <person name="Wortman J.R."/>
            <person name="Kim H.S."/>
            <person name="Arroyo J."/>
            <person name="Berriman M."/>
            <person name="Abe K."/>
            <person name="Archer D.B."/>
            <person name="Bermejo C."/>
            <person name="Bennett J.W."/>
            <person name="Bowyer P."/>
            <person name="Chen D."/>
            <person name="Collins M."/>
            <person name="Coulsen R."/>
            <person name="Davies R."/>
            <person name="Dyer P.S."/>
            <person name="Farman M.L."/>
            <person name="Fedorova N."/>
            <person name="Fedorova N.D."/>
            <person name="Feldblyum T.V."/>
            <person name="Fischer R."/>
            <person name="Fosker N."/>
            <person name="Fraser A."/>
            <person name="Garcia J.L."/>
            <person name="Garcia M.J."/>
            <person name="Goble A."/>
            <person name="Goldman G.H."/>
            <person name="Gomi K."/>
            <person name="Griffith-Jones S."/>
            <person name="Gwilliam R."/>
            <person name="Haas B.J."/>
            <person name="Haas H."/>
            <person name="Harris D.E."/>
            <person name="Horiuchi H."/>
            <person name="Huang J."/>
            <person name="Humphray S."/>
            <person name="Jimenez J."/>
            <person name="Keller N."/>
            <person name="Khouri H."/>
            <person name="Kitamoto K."/>
            <person name="Kobayashi T."/>
            <person name="Konzack S."/>
            <person name="Kulkarni R."/>
            <person name="Kumagai T."/>
            <person name="Lafton A."/>
            <person name="Latge J.-P."/>
            <person name="Li W."/>
            <person name="Lord A."/>
            <person name="Lu C."/>
            <person name="Majoros W.H."/>
            <person name="May G.S."/>
            <person name="Miller B.L."/>
            <person name="Mohamoud Y."/>
            <person name="Molina M."/>
            <person name="Monod M."/>
            <person name="Mouyna I."/>
            <person name="Mulligan S."/>
            <person name="Murphy L.D."/>
            <person name="O'Neil S."/>
            <person name="Paulsen I."/>
            <person name="Penalva M.A."/>
            <person name="Pertea M."/>
            <person name="Price C."/>
            <person name="Pritchard B.L."/>
            <person name="Quail M.A."/>
            <person name="Rabbinowitsch E."/>
            <person name="Rawlins N."/>
            <person name="Rajandream M.A."/>
            <person name="Reichard U."/>
            <person name="Renauld H."/>
            <person name="Robson G.D."/>
            <person name="Rodriguez de Cordoba S."/>
            <person name="Rodriguez-Pena J.M."/>
            <person name="Ronning C.M."/>
            <person name="Rutter S."/>
            <person name="Salzberg S.L."/>
            <person name="Sanchez M."/>
            <person name="Sanchez-Ferrero J.C."/>
            <person name="Saunders D."/>
            <person name="Seeger K."/>
            <person name="Squares R."/>
            <person name="Squares S."/>
            <person name="Takeuchi M."/>
            <person name="Tekaia F."/>
            <person name="Turner G."/>
            <person name="Vazquez de Aldana C.R."/>
            <person name="Weidman J."/>
            <person name="White O."/>
            <person name="Woodward J.R."/>
            <person name="Yu J.-H."/>
            <person name="Fraser C.M."/>
            <person name="Galagan J.E."/>
            <person name="Asai K."/>
            <person name="Machida M."/>
            <person name="Hall N."/>
            <person name="Barrell B.G."/>
            <person name="Denning D.W."/>
        </authorList>
    </citation>
    <scope>NUCLEOTIDE SEQUENCE [LARGE SCALE GENOMIC DNA]</scope>
    <source>
        <strain>ATCC MYA-4609 / CBS 101355 / FGSC A1100 / Af293</strain>
    </source>
</reference>
<reference key="2">
    <citation type="journal article" date="2005" name="Med. Mycol.">
        <title>The ergosterol biosynthesis pathway, transporter genes, and azole resistance in Aspergillus fumigatus.</title>
        <authorList>
            <person name="Ferreira M.E."/>
            <person name="Colombo A.L."/>
            <person name="Paulsen I."/>
            <person name="Ren Q."/>
            <person name="Wortman J."/>
            <person name="Huang J."/>
            <person name="Goldman M.H."/>
            <person name="Goldman G.H."/>
        </authorList>
    </citation>
    <scope>IDENTIFICATION</scope>
    <scope>FUNCTION</scope>
    <scope>PATHWAY</scope>
</reference>
<reference key="3">
    <citation type="journal article" date="2008" name="Steroids">
        <title>Ergosterol biosynthesis pathway in Aspergillus fumigatus.</title>
        <authorList>
            <person name="Alcazar-Fuoli L."/>
            <person name="Mellado E."/>
            <person name="Garcia-Effron G."/>
            <person name="Lopez J.F."/>
            <person name="Grimalt J.O."/>
            <person name="Cuenca-Estrella J.M."/>
            <person name="Rodriguez-Tudela J.L."/>
        </authorList>
    </citation>
    <scope>FUNCTION</scope>
</reference>
<gene>
    <name evidence="4" type="primary">erg2</name>
    <name type="ORF">AFUA_1G04720</name>
</gene>
<protein>
    <recommendedName>
        <fullName evidence="4">C-8 sterol isomerase erg2</fullName>
        <ecNumber evidence="1">5.-.-.-</ecNumber>
    </recommendedName>
    <alternativeName>
        <fullName evidence="4">Delta-8--delta-7 sterol isomerase erg2</fullName>
    </alternativeName>
    <alternativeName>
        <fullName evidence="4">Ergosterol biosynthesis protein 2</fullName>
    </alternativeName>
</protein>
<proteinExistence type="inferred from homology"/>